<gene>
    <name type="primary">MT-ND3</name>
    <name type="synonym">MTND3</name>
    <name type="synonym">NADH3</name>
    <name type="synonym">ND3</name>
</gene>
<organism>
    <name type="scientific">Oncorhynchus kisutch</name>
    <name type="common">Coho salmon</name>
    <name type="synonym">Salmo kisutch</name>
    <dbReference type="NCBI Taxonomy" id="8019"/>
    <lineage>
        <taxon>Eukaryota</taxon>
        <taxon>Metazoa</taxon>
        <taxon>Chordata</taxon>
        <taxon>Craniata</taxon>
        <taxon>Vertebrata</taxon>
        <taxon>Euteleostomi</taxon>
        <taxon>Actinopterygii</taxon>
        <taxon>Neopterygii</taxon>
        <taxon>Teleostei</taxon>
        <taxon>Protacanthopterygii</taxon>
        <taxon>Salmoniformes</taxon>
        <taxon>Salmonidae</taxon>
        <taxon>Salmoninae</taxon>
        <taxon>Oncorhynchus</taxon>
    </lineage>
</organism>
<dbReference type="EC" id="7.1.1.2"/>
<dbReference type="PIR" id="G30396">
    <property type="entry name" value="G30396"/>
</dbReference>
<dbReference type="RefSeq" id="YP_001122907.1">
    <property type="nucleotide sequence ID" value="NC_009263.1"/>
</dbReference>
<dbReference type="SMR" id="P20687"/>
<dbReference type="GeneID" id="4955079"/>
<dbReference type="KEGG" id="oki:4955079"/>
<dbReference type="CTD" id="4537"/>
<dbReference type="OrthoDB" id="62658at7898"/>
<dbReference type="Proteomes" id="UP000694557">
    <property type="component" value="Unassembled WGS sequence"/>
</dbReference>
<dbReference type="GO" id="GO:0031966">
    <property type="term" value="C:mitochondrial membrane"/>
    <property type="evidence" value="ECO:0007669"/>
    <property type="project" value="UniProtKB-SubCell"/>
</dbReference>
<dbReference type="GO" id="GO:0030964">
    <property type="term" value="C:NADH dehydrogenase complex"/>
    <property type="evidence" value="ECO:0007669"/>
    <property type="project" value="TreeGrafter"/>
</dbReference>
<dbReference type="GO" id="GO:0008137">
    <property type="term" value="F:NADH dehydrogenase (ubiquinone) activity"/>
    <property type="evidence" value="ECO:0007669"/>
    <property type="project" value="UniProtKB-EC"/>
</dbReference>
<dbReference type="FunFam" id="1.20.58.1610:FF:000004">
    <property type="entry name" value="NADH-quinone oxidoreductase subunit A"/>
    <property type="match status" value="1"/>
</dbReference>
<dbReference type="Gene3D" id="1.20.58.1610">
    <property type="entry name" value="NADH:ubiquinone/plastoquinone oxidoreductase, chain 3"/>
    <property type="match status" value="1"/>
</dbReference>
<dbReference type="InterPro" id="IPR000440">
    <property type="entry name" value="NADH_UbQ/plastoQ_OxRdtase_su3"/>
</dbReference>
<dbReference type="InterPro" id="IPR038430">
    <property type="entry name" value="NDAH_ubi_oxred_su3_sf"/>
</dbReference>
<dbReference type="PANTHER" id="PTHR11058">
    <property type="entry name" value="NADH-UBIQUINONE OXIDOREDUCTASE CHAIN 3"/>
    <property type="match status" value="1"/>
</dbReference>
<dbReference type="PANTHER" id="PTHR11058:SF9">
    <property type="entry name" value="NADH-UBIQUINONE OXIDOREDUCTASE CHAIN 3"/>
    <property type="match status" value="1"/>
</dbReference>
<dbReference type="Pfam" id="PF00507">
    <property type="entry name" value="Oxidored_q4"/>
    <property type="match status" value="1"/>
</dbReference>
<geneLocation type="mitochondrion"/>
<comment type="function">
    <text evidence="1">Core subunit of the mitochondrial membrane respiratory chain NADH dehydrogenase (Complex I) that is believed to belong to the minimal assembly required for catalysis. Complex I functions in the transfer of electrons from NADH to the respiratory chain. The immediate electron acceptor for the enzyme is believed to be ubiquinone (By similarity).</text>
</comment>
<comment type="catalytic activity">
    <reaction>
        <text>a ubiquinone + NADH + 5 H(+)(in) = a ubiquinol + NAD(+) + 4 H(+)(out)</text>
        <dbReference type="Rhea" id="RHEA:29091"/>
        <dbReference type="Rhea" id="RHEA-COMP:9565"/>
        <dbReference type="Rhea" id="RHEA-COMP:9566"/>
        <dbReference type="ChEBI" id="CHEBI:15378"/>
        <dbReference type="ChEBI" id="CHEBI:16389"/>
        <dbReference type="ChEBI" id="CHEBI:17976"/>
        <dbReference type="ChEBI" id="CHEBI:57540"/>
        <dbReference type="ChEBI" id="CHEBI:57945"/>
        <dbReference type="EC" id="7.1.1.2"/>
    </reaction>
</comment>
<comment type="subcellular location">
    <subcellularLocation>
        <location evidence="1">Mitochondrion membrane</location>
        <topology evidence="1">Multi-pass membrane protein</topology>
    </subcellularLocation>
</comment>
<comment type="similarity">
    <text evidence="3">Belongs to the complex I subunit 3 family.</text>
</comment>
<protein>
    <recommendedName>
        <fullName>NADH-ubiquinone oxidoreductase chain 3</fullName>
        <ecNumber>7.1.1.2</ecNumber>
    </recommendedName>
    <alternativeName>
        <fullName>NADH dehydrogenase subunit 3</fullName>
    </alternativeName>
</protein>
<name>NU3M_ONCKI</name>
<feature type="chain" id="PRO_0000117777" description="NADH-ubiquinone oxidoreductase chain 3">
    <location>
        <begin position="1"/>
        <end position="116"/>
    </location>
</feature>
<feature type="transmembrane region" description="Helical" evidence="2">
    <location>
        <begin position="3"/>
        <end position="23"/>
    </location>
</feature>
<feature type="transmembrane region" description="Helical" evidence="2">
    <location>
        <begin position="56"/>
        <end position="76"/>
    </location>
</feature>
<feature type="transmembrane region" description="Helical" evidence="2">
    <location>
        <begin position="87"/>
        <end position="107"/>
    </location>
</feature>
<evidence type="ECO:0000250" key="1"/>
<evidence type="ECO:0000255" key="2"/>
<evidence type="ECO:0000305" key="3"/>
<sequence length="116" mass="12880">MNLITTIITITITLSAVLATVSFWLPQISPDAEKLSPYECGFDPLGSARLPFSLRFFLIAILFLLFDLEIALLLPLPWGDQLNTPTLTLVWSTAVLALLTLGLIYEWTQGGLEWAE</sequence>
<keyword id="KW-0249">Electron transport</keyword>
<keyword id="KW-0472">Membrane</keyword>
<keyword id="KW-0496">Mitochondrion</keyword>
<keyword id="KW-0520">NAD</keyword>
<keyword id="KW-1185">Reference proteome</keyword>
<keyword id="KW-0679">Respiratory chain</keyword>
<keyword id="KW-1278">Translocase</keyword>
<keyword id="KW-0812">Transmembrane</keyword>
<keyword id="KW-1133">Transmembrane helix</keyword>
<keyword id="KW-0813">Transport</keyword>
<keyword id="KW-0830">Ubiquinone</keyword>
<reference key="1">
    <citation type="journal article" date="1989" name="J. Mol. Evol.">
        <title>Variation in salmonid mitochondrial DNA: evolutionary constraints and mechanisms of substitution.</title>
        <authorList>
            <person name="Thomas W.K."/>
            <person name="Beckenbach A.T."/>
        </authorList>
    </citation>
    <scope>NUCLEOTIDE SEQUENCE</scope>
</reference>
<proteinExistence type="inferred from homology"/>
<accession>P20687</accession>